<feature type="chain" id="PRO_0000066132" description="Uncharacterized protein in ATPase CF(0) subunits 3'region">
    <location>
        <begin position="1" status="less than"/>
        <end position="173"/>
    </location>
</feature>
<feature type="non-terminal residue">
    <location>
        <position position="1"/>
    </location>
</feature>
<accession>P15016</accession>
<sequence length="173" mass="18806">LNREGRSRLLESFQRVDGHFRTLFLKLFGGGRAHLTLIESDDPLEAGLEIMASPPGKRLQSLGLLSGGEQALTATALLFAVFLTNPAPICVLDEVDAPLDDANVDRFCAMLRHLTDTTGTRFLVVTHHRMTMARMDRLFGVTMAERGVSSLVSVDLCQAEDLVEAESPAAVLA</sequence>
<organism>
    <name type="scientific">Rhodospirillum rubrum</name>
    <dbReference type="NCBI Taxonomy" id="1085"/>
    <lineage>
        <taxon>Bacteria</taxon>
        <taxon>Pseudomonadati</taxon>
        <taxon>Pseudomonadota</taxon>
        <taxon>Alphaproteobacteria</taxon>
        <taxon>Rhodospirillales</taxon>
        <taxon>Rhodospirillaceae</taxon>
        <taxon>Rhodospirillum</taxon>
    </lineage>
</organism>
<name>YAT3_RHORU</name>
<dbReference type="EMBL" id="M37308">
    <property type="protein sequence ID" value="AAA26453.1"/>
    <property type="molecule type" value="Genomic_DNA"/>
</dbReference>
<dbReference type="EMBL" id="X12757">
    <property type="protein sequence ID" value="CAA31244.1"/>
    <property type="molecule type" value="Genomic_DNA"/>
</dbReference>
<dbReference type="PIR" id="S01145">
    <property type="entry name" value="S01145"/>
</dbReference>
<dbReference type="SMR" id="P15016"/>
<dbReference type="CDD" id="cd03278">
    <property type="entry name" value="ABC_SMC_barmotin"/>
    <property type="match status" value="1"/>
</dbReference>
<dbReference type="Gene3D" id="3.40.50.300">
    <property type="entry name" value="P-loop containing nucleotide triphosphate hydrolases"/>
    <property type="match status" value="1"/>
</dbReference>
<dbReference type="InterPro" id="IPR027417">
    <property type="entry name" value="P-loop_NTPase"/>
</dbReference>
<dbReference type="InterPro" id="IPR003395">
    <property type="entry name" value="RecF/RecN/SMC_N"/>
</dbReference>
<dbReference type="PANTHER" id="PTHR43977">
    <property type="entry name" value="STRUCTURAL MAINTENANCE OF CHROMOSOMES PROTEIN 3"/>
    <property type="match status" value="1"/>
</dbReference>
<dbReference type="Pfam" id="PF02463">
    <property type="entry name" value="SMC_N"/>
    <property type="match status" value="1"/>
</dbReference>
<dbReference type="SUPFAM" id="SSF52540">
    <property type="entry name" value="P-loop containing nucleoside triphosphate hydrolases"/>
    <property type="match status" value="1"/>
</dbReference>
<reference key="1">
    <citation type="journal article" date="1988" name="Biochem. J.">
        <title>DNA sequence of a gene cluster coding for subunits of the F0 membrane sector of ATP synthase in Rhodospirillum rubrum. Support for modular evolution of the F1 and F0 sectors.</title>
        <authorList>
            <person name="Falk G."/>
            <person name="Walker J.E."/>
        </authorList>
    </citation>
    <scope>NUCLEOTIDE SEQUENCE [GENOMIC DNA]</scope>
</reference>
<protein>
    <recommendedName>
        <fullName>Uncharacterized protein in ATPase CF(0) subunits 3'region</fullName>
        <shortName>URF3</shortName>
    </recommendedName>
</protein>
<proteinExistence type="predicted"/>